<reference key="1">
    <citation type="journal article" date="1998" name="Science">
        <title>Complete genome sequence of Treponema pallidum, the syphilis spirochete.</title>
        <authorList>
            <person name="Fraser C.M."/>
            <person name="Norris S.J."/>
            <person name="Weinstock G.M."/>
            <person name="White O."/>
            <person name="Sutton G.G."/>
            <person name="Dodson R.J."/>
            <person name="Gwinn M.L."/>
            <person name="Hickey E.K."/>
            <person name="Clayton R.A."/>
            <person name="Ketchum K.A."/>
            <person name="Sodergren E."/>
            <person name="Hardham J.M."/>
            <person name="McLeod M.P."/>
            <person name="Salzberg S.L."/>
            <person name="Peterson J.D."/>
            <person name="Khalak H.G."/>
            <person name="Richardson D.L."/>
            <person name="Howell J.K."/>
            <person name="Chidambaram M."/>
            <person name="Utterback T.R."/>
            <person name="McDonald L.A."/>
            <person name="Artiach P."/>
            <person name="Bowman C."/>
            <person name="Cotton M.D."/>
            <person name="Fujii C."/>
            <person name="Garland S.A."/>
            <person name="Hatch B."/>
            <person name="Horst K."/>
            <person name="Roberts K.M."/>
            <person name="Sandusky M."/>
            <person name="Weidman J.F."/>
            <person name="Smith H.O."/>
            <person name="Venter J.C."/>
        </authorList>
    </citation>
    <scope>NUCLEOTIDE SEQUENCE [LARGE SCALE GENOMIC DNA]</scope>
    <source>
        <strain>Nichols</strain>
    </source>
</reference>
<dbReference type="EMBL" id="AE000520">
    <property type="protein sequence ID" value="AAC65162.1"/>
    <property type="molecule type" value="Genomic_DNA"/>
</dbReference>
<dbReference type="PIR" id="A71358">
    <property type="entry name" value="A71358"/>
</dbReference>
<dbReference type="RefSeq" id="WP_010881619.1">
    <property type="nucleotide sequence ID" value="NC_000919.1"/>
</dbReference>
<dbReference type="SMR" id="O83202"/>
<dbReference type="STRING" id="243276.TP_0172"/>
<dbReference type="EnsemblBacteria" id="AAC65162">
    <property type="protein sequence ID" value="AAC65162"/>
    <property type="gene ID" value="TP_0172"/>
</dbReference>
<dbReference type="KEGG" id="tpa:TP_0172"/>
<dbReference type="HOGENOM" id="CLU_1531865_0_0_12"/>
<dbReference type="Proteomes" id="UP000000811">
    <property type="component" value="Chromosome"/>
</dbReference>
<proteinExistence type="predicted"/>
<name>Y172_TREPA</name>
<organism>
    <name type="scientific">Treponema pallidum (strain Nichols)</name>
    <dbReference type="NCBI Taxonomy" id="243276"/>
    <lineage>
        <taxon>Bacteria</taxon>
        <taxon>Pseudomonadati</taxon>
        <taxon>Spirochaetota</taxon>
        <taxon>Spirochaetia</taxon>
        <taxon>Spirochaetales</taxon>
        <taxon>Treponemataceae</taxon>
        <taxon>Treponema</taxon>
    </lineage>
</organism>
<gene>
    <name type="ordered locus">TP_0172</name>
</gene>
<feature type="chain" id="PRO_0000202204" description="Uncharacterized protein TP_0172">
    <location>
        <begin position="1"/>
        <end position="175"/>
    </location>
</feature>
<sequence length="175" mass="19544">MSDLEGLHLYNHSDEELFSIHDSVFQEHTGGEGRMSSSSGEEGCGQTLLPVHEKKSTYGLFNPLTGVGWRAYLEERLEAELGRATASEQDLTLMIVQVEHPAHQTAVADAAKKLVEFFKFRDMLFEFEGSCCFAGIVQDASLEERWYSRGIYTRSCAAPLRAHASLSASRRVRPD</sequence>
<keyword id="KW-1185">Reference proteome</keyword>
<accession>O83202</accession>
<protein>
    <recommendedName>
        <fullName>Uncharacterized protein TP_0172</fullName>
    </recommendedName>
</protein>